<evidence type="ECO:0000250" key="1"/>
<evidence type="ECO:0000250" key="2">
    <source>
        <dbReference type="UniProtKB" id="Q969X0"/>
    </source>
</evidence>
<evidence type="ECO:0000250" key="3">
    <source>
        <dbReference type="UniProtKB" id="Q99LE1"/>
    </source>
</evidence>
<evidence type="ECO:0000255" key="4"/>
<evidence type="ECO:0000255" key="5">
    <source>
        <dbReference type="PROSITE-ProRule" id="PRU01112"/>
    </source>
</evidence>
<evidence type="ECO:0000255" key="6">
    <source>
        <dbReference type="PROSITE-ProRule" id="PRU01113"/>
    </source>
</evidence>
<evidence type="ECO:0000269" key="7">
    <source>
    </source>
</evidence>
<proteinExistence type="evidence at protein level"/>
<comment type="function">
    <text evidence="3 7">Involved in cell shape and neuronal morphogenesis, positively regulating the establishment and maintenance of dendritic spines (PubMed:19812310). Plays a role in cellular protein transport, including protein transport away from primary cilia (By similarity). May function via activation of RAC1 and PAK1 (PubMed:19812310).</text>
</comment>
<comment type="subunit">
    <text evidence="2 3 7">Homodimer (By similarity). Interacts (via N-terminus) with MYO5A, the interaction is required for its role in dendrite formation (PubMed:19812310). Interacts with RAC1 (PubMed:19812310). Interacts with RAB8A; interaction is dependent on the phosphorylation of RAB8A on 'Thr-72' (By similarity). Interacts with RAB10 and RAB12; interaction is dependent on the phosphorylation of 'Thr-73' on RAB10 and 'Ser-105' on RAB12 (By similarity).</text>
</comment>
<comment type="subcellular location">
    <subcellularLocation>
        <location evidence="1">Cytoplasm</location>
        <location evidence="1">Cytosol</location>
    </subcellularLocation>
    <subcellularLocation>
        <location evidence="1">Cytoplasm</location>
        <location evidence="1">Cytoskeleton</location>
        <location evidence="1">Microtubule organizing center</location>
        <location evidence="1">Centrosome</location>
    </subcellularLocation>
    <subcellularLocation>
        <location evidence="1">Cell projection</location>
        <location evidence="1">Cilium</location>
    </subcellularLocation>
</comment>
<name>RIPL2_RAT</name>
<sequence>MEEPPVREEEDGEEDEGALAKSPLQLTTEDVYDISYVVGRELMALGSDPRVTRLQFKIVRVMEMLEALVNEGSLAVEELRMERDNLKQEVEGLRRAGVSGSEVNLGPDKMVVDLTDPNRPRFTLQELRDVLQERNKLKSQLLLVQEELQCYRSGLLPPRETPGGRREKDAMVTMGNGEKEERTIMKKLFSFRSGKHT</sequence>
<dbReference type="EMBL" id="BC079132">
    <property type="protein sequence ID" value="AAH79132.1"/>
    <property type="molecule type" value="mRNA"/>
</dbReference>
<dbReference type="RefSeq" id="NP_001004205.1">
    <property type="nucleotide sequence ID" value="NM_001004205.1"/>
</dbReference>
<dbReference type="SMR" id="Q6AYA0"/>
<dbReference type="FunCoup" id="Q6AYA0">
    <property type="interactions" value="457"/>
</dbReference>
<dbReference type="STRING" id="10116.ENSRNOP00000001403"/>
<dbReference type="PhosphoSitePlus" id="Q6AYA0"/>
<dbReference type="PaxDb" id="10116-ENSRNOP00000001403"/>
<dbReference type="Ensembl" id="ENSRNOT00000001403.5">
    <property type="protein sequence ID" value="ENSRNOP00000001403.4"/>
    <property type="gene ID" value="ENSRNOG00000001061.7"/>
</dbReference>
<dbReference type="GeneID" id="288652"/>
<dbReference type="KEGG" id="rno:288652"/>
<dbReference type="UCSC" id="RGD:1303140">
    <property type="organism name" value="rat"/>
</dbReference>
<dbReference type="AGR" id="RGD:1303140"/>
<dbReference type="CTD" id="196383"/>
<dbReference type="RGD" id="1303140">
    <property type="gene designation" value="Rilpl2"/>
</dbReference>
<dbReference type="eggNOG" id="ENOG502S08B">
    <property type="taxonomic scope" value="Eukaryota"/>
</dbReference>
<dbReference type="GeneTree" id="ENSGT00940000160182"/>
<dbReference type="HOGENOM" id="CLU_096533_1_0_1"/>
<dbReference type="InParanoid" id="Q6AYA0"/>
<dbReference type="OrthoDB" id="87709at9989"/>
<dbReference type="PhylomeDB" id="Q6AYA0"/>
<dbReference type="PRO" id="PR:Q6AYA0"/>
<dbReference type="Proteomes" id="UP000002494">
    <property type="component" value="Chromosome 12"/>
</dbReference>
<dbReference type="Bgee" id="ENSRNOG00000001061">
    <property type="expression patterns" value="Expressed in spleen and 19 other cell types or tissues"/>
</dbReference>
<dbReference type="GO" id="GO:0005813">
    <property type="term" value="C:centrosome"/>
    <property type="evidence" value="ECO:0000250"/>
    <property type="project" value="UniProtKB"/>
</dbReference>
<dbReference type="GO" id="GO:0036064">
    <property type="term" value="C:ciliary basal body"/>
    <property type="evidence" value="ECO:0000318"/>
    <property type="project" value="GO_Central"/>
</dbReference>
<dbReference type="GO" id="GO:0005929">
    <property type="term" value="C:cilium"/>
    <property type="evidence" value="ECO:0000250"/>
    <property type="project" value="UniProtKB"/>
</dbReference>
<dbReference type="GO" id="GO:0005737">
    <property type="term" value="C:cytoplasm"/>
    <property type="evidence" value="ECO:0000318"/>
    <property type="project" value="GO_Central"/>
</dbReference>
<dbReference type="GO" id="GO:0005829">
    <property type="term" value="C:cytosol"/>
    <property type="evidence" value="ECO:0007669"/>
    <property type="project" value="UniProtKB-SubCell"/>
</dbReference>
<dbReference type="GO" id="GO:0043231">
    <property type="term" value="C:intracellular membrane-bounded organelle"/>
    <property type="evidence" value="ECO:0007669"/>
    <property type="project" value="Ensembl"/>
</dbReference>
<dbReference type="GO" id="GO:0016020">
    <property type="term" value="C:membrane"/>
    <property type="evidence" value="ECO:0007669"/>
    <property type="project" value="GOC"/>
</dbReference>
<dbReference type="GO" id="GO:0051959">
    <property type="term" value="F:dynein light intermediate chain binding"/>
    <property type="evidence" value="ECO:0000318"/>
    <property type="project" value="GO_Central"/>
</dbReference>
<dbReference type="GO" id="GO:0042802">
    <property type="term" value="F:identical protein binding"/>
    <property type="evidence" value="ECO:0000266"/>
    <property type="project" value="RGD"/>
</dbReference>
<dbReference type="GO" id="GO:0046983">
    <property type="term" value="F:protein dimerization activity"/>
    <property type="evidence" value="ECO:0007669"/>
    <property type="project" value="InterPro"/>
</dbReference>
<dbReference type="GO" id="GO:0031267">
    <property type="term" value="F:small GTPase binding"/>
    <property type="evidence" value="ECO:0000318"/>
    <property type="project" value="GO_Central"/>
</dbReference>
<dbReference type="GO" id="GO:0060271">
    <property type="term" value="P:cilium assembly"/>
    <property type="evidence" value="ECO:0000318"/>
    <property type="project" value="GO_Central"/>
</dbReference>
<dbReference type="GO" id="GO:0003382">
    <property type="term" value="P:epithelial cell morphogenesis"/>
    <property type="evidence" value="ECO:0000250"/>
    <property type="project" value="UniProtKB"/>
</dbReference>
<dbReference type="GO" id="GO:1903445">
    <property type="term" value="P:protein transport from ciliary membrane to plasma membrane"/>
    <property type="evidence" value="ECO:0000250"/>
    <property type="project" value="UniProtKB"/>
</dbReference>
<dbReference type="CDD" id="cd14445">
    <property type="entry name" value="RILP-like"/>
    <property type="match status" value="1"/>
</dbReference>
<dbReference type="FunFam" id="1.20.58.1770:FF:000003">
    <property type="entry name" value="RILP-like protein 2 isoform X1"/>
    <property type="match status" value="1"/>
</dbReference>
<dbReference type="Gene3D" id="1.20.58.1770">
    <property type="match status" value="1"/>
</dbReference>
<dbReference type="Gene3D" id="6.10.230.10">
    <property type="match status" value="1"/>
</dbReference>
<dbReference type="InterPro" id="IPR051241">
    <property type="entry name" value="DZIP_RILPL"/>
</dbReference>
<dbReference type="InterPro" id="IPR034743">
    <property type="entry name" value="RH1"/>
</dbReference>
<dbReference type="InterPro" id="IPR034744">
    <property type="entry name" value="RH2"/>
</dbReference>
<dbReference type="InterPro" id="IPR021563">
    <property type="entry name" value="RILP_dimer"/>
</dbReference>
<dbReference type="PANTHER" id="PTHR21502:SF2">
    <property type="entry name" value="RILP-LIKE PROTEIN 2"/>
    <property type="match status" value="1"/>
</dbReference>
<dbReference type="PANTHER" id="PTHR21502">
    <property type="entry name" value="ZINC FINGER PROTEIN DZIP1"/>
    <property type="match status" value="1"/>
</dbReference>
<dbReference type="Pfam" id="PF09744">
    <property type="entry name" value="RH1"/>
    <property type="match status" value="1"/>
</dbReference>
<dbReference type="Pfam" id="PF11461">
    <property type="entry name" value="RILP"/>
    <property type="match status" value="1"/>
</dbReference>
<dbReference type="SUPFAM" id="SSF161256">
    <property type="entry name" value="RILP dimerisation region"/>
    <property type="match status" value="1"/>
</dbReference>
<dbReference type="PROSITE" id="PS51776">
    <property type="entry name" value="RH1"/>
    <property type="match status" value="1"/>
</dbReference>
<dbReference type="PROSITE" id="PS51777">
    <property type="entry name" value="RH2"/>
    <property type="match status" value="1"/>
</dbReference>
<organism>
    <name type="scientific">Rattus norvegicus</name>
    <name type="common">Rat</name>
    <dbReference type="NCBI Taxonomy" id="10116"/>
    <lineage>
        <taxon>Eukaryota</taxon>
        <taxon>Metazoa</taxon>
        <taxon>Chordata</taxon>
        <taxon>Craniata</taxon>
        <taxon>Vertebrata</taxon>
        <taxon>Euteleostomi</taxon>
        <taxon>Mammalia</taxon>
        <taxon>Eutheria</taxon>
        <taxon>Euarchontoglires</taxon>
        <taxon>Glires</taxon>
        <taxon>Rodentia</taxon>
        <taxon>Myomorpha</taxon>
        <taxon>Muroidea</taxon>
        <taxon>Muridae</taxon>
        <taxon>Murinae</taxon>
        <taxon>Rattus</taxon>
    </lineage>
</organism>
<protein>
    <recommendedName>
        <fullName>RILP-like protein 2</fullName>
    </recommendedName>
    <alternativeName>
        <fullName>Rab-interacting lysosomal-like protein 2</fullName>
    </alternativeName>
</protein>
<gene>
    <name type="primary">Rilpl2</name>
</gene>
<feature type="chain" id="PRO_0000317007" description="RILP-like protein 2">
    <location>
        <begin position="1"/>
        <end position="197"/>
    </location>
</feature>
<feature type="domain" description="RH1" evidence="5">
    <location>
        <begin position="14"/>
        <end position="96"/>
    </location>
</feature>
<feature type="domain" description="RH2" evidence="6">
    <location>
        <begin position="119"/>
        <end position="184"/>
    </location>
</feature>
<feature type="coiled-coil region" evidence="4">
    <location>
        <begin position="65"/>
        <end position="153"/>
    </location>
</feature>
<accession>Q6AYA0</accession>
<reference key="1">
    <citation type="journal article" date="2004" name="Genome Res.">
        <title>The status, quality, and expansion of the NIH full-length cDNA project: the Mammalian Gene Collection (MGC).</title>
        <authorList>
            <consortium name="The MGC Project Team"/>
        </authorList>
    </citation>
    <scope>NUCLEOTIDE SEQUENCE [LARGE SCALE MRNA]</scope>
    <source>
        <tissue>Kidney</tissue>
    </source>
</reference>
<reference key="2">
    <citation type="journal article" date="2009" name="J. Cell Sci.">
        <title>Myosin-Va-interacting protein, RILPL2, controls cell shape and neuronal morphogenesis via Rac signaling.</title>
        <authorList>
            <person name="Lise M.F."/>
            <person name="Srivastava D.P."/>
            <person name="Arstikaitis P."/>
            <person name="Lett R.L."/>
            <person name="Sheta R."/>
            <person name="Viswanathan V."/>
            <person name="Penzes P."/>
            <person name="O'Connor T.P."/>
            <person name="El-Husseini A."/>
        </authorList>
    </citation>
    <scope>FUNCTION</scope>
    <scope>INTERACTION WITH MYO5A AND RAC1</scope>
</reference>
<keyword id="KW-0966">Cell projection</keyword>
<keyword id="KW-0969">Cilium</keyword>
<keyword id="KW-0175">Coiled coil</keyword>
<keyword id="KW-0963">Cytoplasm</keyword>
<keyword id="KW-0206">Cytoskeleton</keyword>
<keyword id="KW-0653">Protein transport</keyword>
<keyword id="KW-1185">Reference proteome</keyword>
<keyword id="KW-0813">Transport</keyword>